<organism>
    <name type="scientific">Mus musculus</name>
    <name type="common">Mouse</name>
    <dbReference type="NCBI Taxonomy" id="10090"/>
    <lineage>
        <taxon>Eukaryota</taxon>
        <taxon>Metazoa</taxon>
        <taxon>Chordata</taxon>
        <taxon>Craniata</taxon>
        <taxon>Vertebrata</taxon>
        <taxon>Euteleostomi</taxon>
        <taxon>Mammalia</taxon>
        <taxon>Eutheria</taxon>
        <taxon>Euarchontoglires</taxon>
        <taxon>Glires</taxon>
        <taxon>Rodentia</taxon>
        <taxon>Myomorpha</taxon>
        <taxon>Muroidea</taxon>
        <taxon>Muridae</taxon>
        <taxon>Murinae</taxon>
        <taxon>Mus</taxon>
        <taxon>Mus</taxon>
    </lineage>
</organism>
<proteinExistence type="evidence at protein level"/>
<protein>
    <recommendedName>
        <fullName evidence="24">Long-chain fatty acid transport protein 1</fullName>
    </recommendedName>
    <alternativeName>
        <fullName>Arachidonate--CoA ligase</fullName>
        <ecNumber evidence="4 7 10">6.2.1.15</ecNumber>
    </alternativeName>
    <alternativeName>
        <fullName evidence="22">Fatty acid transport protein</fullName>
    </alternativeName>
    <alternativeName>
        <fullName evidence="23">Fatty acid transport protein 1</fullName>
        <shortName evidence="21">FATP-1</shortName>
    </alternativeName>
    <alternativeName>
        <fullName>Long-chain-fatty-acid--CoA ligase</fullName>
        <ecNumber evidence="4 7 10">6.2.1.3</ecNumber>
    </alternativeName>
    <alternativeName>
        <fullName evidence="27">Solute carrier family 27 member 1</fullName>
        <shortName evidence="21">Vlc27a1</shortName>
    </alternativeName>
    <alternativeName>
        <fullName>Very long-chain acyl-CoA synthetase</fullName>
        <ecNumber evidence="12">6.2.1.-</ecNumber>
    </alternativeName>
</protein>
<comment type="function">
    <text evidence="1 3 4 6 7 10 11 12 13 14 15 16 17 18 20 26">Mediates the import of long-chain fatty acids (LCFA) into the cell by facilitating their transport at the plasma membrane (Probable) (PubMed:10471110, PubMed:11970897, PubMed:12235169, PubMed:15699031, PubMed:19527715, PubMed:24858472, PubMed:28178239, PubMed:7954810, PubMed:9671728, PubMed:9786857). Also functions as an acyl-CoA ligase catalyzing the ATP-dependent formation of fatty acyl-CoA using LCFA and very-long-chain fatty acids (VLCFA) as substrates, which prevents fatty acid efflux from cells and might drive more fatty acid uptake (PubMed:10593920, PubMed:12235169, PubMed:12937175). May act directly as a bona fide transporter, or alternatively, in a cytoplasmic or membrane-associated multimeric protein complex to trap and draw fatty acids towards accumulation (PubMed:14991074, PubMed:15897321). Plays a pivotal role in regulating available LCFA substrates from exogenous sources in tissues undergoing high levels of beta-oxidation or triglyceride synthesis (PubMed:12235169). May be involved in regulation of cholesterol metabolism (PubMed:12235169). Probably involved in fatty acid transport across the blood barrier (By similarity).</text>
</comment>
<comment type="catalytic activity">
    <reaction evidence="3 8 12 17 18">
        <text>a fatty acid(in) = a fatty acid(out)</text>
        <dbReference type="Rhea" id="RHEA:38879"/>
        <dbReference type="ChEBI" id="CHEBI:28868"/>
    </reaction>
</comment>
<comment type="catalytic activity">
    <reaction evidence="17">
        <text>(9Z)-octadecenoate(out) = (9Z)-octadecenoate(in)</text>
        <dbReference type="Rhea" id="RHEA:33655"/>
        <dbReference type="ChEBI" id="CHEBI:30823"/>
    </reaction>
</comment>
<comment type="catalytic activity">
    <reaction evidence="17">
        <text>hexadecanoate(out) = hexadecanoate(in)</text>
        <dbReference type="Rhea" id="RHEA:45256"/>
        <dbReference type="ChEBI" id="CHEBI:7896"/>
    </reaction>
</comment>
<comment type="catalytic activity">
    <reaction evidence="17">
        <text>(5Z,8Z,11Z,14Z)-eicosatetraenoate(out) = (5Z,8Z,11Z,14Z)-eicosatetraenoate(in)</text>
        <dbReference type="Rhea" id="RHEA:71395"/>
        <dbReference type="ChEBI" id="CHEBI:32395"/>
    </reaction>
</comment>
<comment type="catalytic activity">
    <reaction evidence="1">
        <text>(9Z,12Z)-octadecadienoate(out) = (9Z,12Z)-octadecadienoate(in)</text>
        <dbReference type="Rhea" id="RHEA:45264"/>
        <dbReference type="ChEBI" id="CHEBI:30245"/>
    </reaction>
</comment>
<comment type="catalytic activity">
    <reaction evidence="12">
        <text>a long-chain fatty acid + ATP + CoA = a long-chain fatty acyl-CoA + AMP + diphosphate</text>
        <dbReference type="Rhea" id="RHEA:15421"/>
        <dbReference type="ChEBI" id="CHEBI:30616"/>
        <dbReference type="ChEBI" id="CHEBI:33019"/>
        <dbReference type="ChEBI" id="CHEBI:57287"/>
        <dbReference type="ChEBI" id="CHEBI:57560"/>
        <dbReference type="ChEBI" id="CHEBI:83139"/>
        <dbReference type="ChEBI" id="CHEBI:456215"/>
        <dbReference type="EC" id="6.2.1.3"/>
    </reaction>
</comment>
<comment type="catalytic activity">
    <reaction evidence="12">
        <text>(5Z,8Z,11Z,14Z)-eicosatetraenoate + ATP + CoA = (5Z,8Z,11Z,14Z)-eicosatetraenoyl-CoA + AMP + diphosphate</text>
        <dbReference type="Rhea" id="RHEA:19713"/>
        <dbReference type="ChEBI" id="CHEBI:30616"/>
        <dbReference type="ChEBI" id="CHEBI:32395"/>
        <dbReference type="ChEBI" id="CHEBI:33019"/>
        <dbReference type="ChEBI" id="CHEBI:57287"/>
        <dbReference type="ChEBI" id="CHEBI:57368"/>
        <dbReference type="ChEBI" id="CHEBI:456215"/>
        <dbReference type="EC" id="6.2.1.15"/>
    </reaction>
    <physiologicalReaction direction="left-to-right" evidence="12">
        <dbReference type="Rhea" id="RHEA:19714"/>
    </physiologicalReaction>
</comment>
<comment type="catalytic activity">
    <reaction evidence="12">
        <text>a very long-chain fatty acid + ATP + CoA = a very long-chain fatty acyl-CoA + AMP + diphosphate</text>
        <dbReference type="Rhea" id="RHEA:54536"/>
        <dbReference type="ChEBI" id="CHEBI:30616"/>
        <dbReference type="ChEBI" id="CHEBI:33019"/>
        <dbReference type="ChEBI" id="CHEBI:57287"/>
        <dbReference type="ChEBI" id="CHEBI:58950"/>
        <dbReference type="ChEBI" id="CHEBI:138261"/>
        <dbReference type="ChEBI" id="CHEBI:456215"/>
    </reaction>
    <physiologicalReaction direction="left-to-right" evidence="12">
        <dbReference type="Rhea" id="RHEA:54537"/>
    </physiologicalReaction>
</comment>
<comment type="catalytic activity">
    <reaction evidence="12">
        <text>tetracosanoate + ATP + CoA = tetracosanoyl-CoA + AMP + diphosphate</text>
        <dbReference type="Rhea" id="RHEA:33639"/>
        <dbReference type="ChEBI" id="CHEBI:30616"/>
        <dbReference type="ChEBI" id="CHEBI:31014"/>
        <dbReference type="ChEBI" id="CHEBI:33019"/>
        <dbReference type="ChEBI" id="CHEBI:57287"/>
        <dbReference type="ChEBI" id="CHEBI:65052"/>
        <dbReference type="ChEBI" id="CHEBI:456215"/>
    </reaction>
    <physiologicalReaction direction="left-to-right" evidence="12">
        <dbReference type="Rhea" id="RHEA:33640"/>
    </physiologicalReaction>
</comment>
<comment type="activity regulation">
    <text evidence="7 14">Inhibited by Triacsin C (PubMed:12235169). Both insulin and muscle contraction stimulate translocation to the plasma membrane in muscle, increasing fatty acid transport activity (PubMed:19527715).</text>
</comment>
<comment type="biophysicochemical properties">
    <kinetics>
        <KM evidence="17">0.2 uM for (9Z)-octadecenoate (oleate)</KM>
    </kinetics>
</comment>
<comment type="subunit">
    <text evidence="1 8 16">Self-associates. May function as a homodimer (PubMed:12533547). Interacts with EPRS1; mediates the translocation of SLC27A1 from the cytoplasm to the plasma membrane thereby increasing the uptake of long-chain fatty acids (PubMed:28178239). Interacts with DGAT2 and this interaction is enhanced in the presence of ZFYVE1 (By similarity).</text>
</comment>
<comment type="subcellular location">
    <subcellularLocation>
        <location evidence="3 4 5 6 15 16 17 20">Cell membrane</location>
        <topology evidence="5 17">Single-pass membrane protein</topology>
    </subcellularLocation>
    <subcellularLocation>
        <location evidence="15">Mitochondrion outer membrane</location>
    </subcellularLocation>
    <subcellularLocation>
        <location evidence="4 13">Endomembrane system</location>
        <topology evidence="5 17">Single-pass membrane protein</topology>
    </subcellularLocation>
    <subcellularLocation>
        <location evidence="4 13">Cytoplasm</location>
    </subcellularLocation>
    <text evidence="13">Plasma membrane and intracellular membranes, at least in adipocytes (PubMed:10593920, PubMed:11970897, PubMed:28178239). In adipocytes, but not myocytes, insulin via the mTORC1 signaling pathway induces a rapid translocation of SLC27A1 from intracellular compartments to the plasma membrane, paralleled by increased LCFA uptake (PubMed:11970897, PubMed:28178239). Insulin-dependent translocation from the cytoplasm to the cell membrane is regulated by EPRS1 (PubMed:11970897, PubMed:28178239). Predominantly cytoplasmic in myocytes (PubMed:15897321).</text>
</comment>
<comment type="tissue specificity">
    <text evidence="9 17 18">Higher expression in white adipose tissue than in heart (PubMed:12556534). Highest expression in skeletal muscle, heart and fat. Lower levels in brain, kidney, lung, liver and testis. No expression in spleen or intestine.</text>
</comment>
<comment type="developmental stage">
    <text evidence="17">Higher expression in differentiated adipocytes compared to preadipocytes.</text>
</comment>
<comment type="induction">
    <text evidence="19">Expression is down-regulated by insulin.</text>
</comment>
<comment type="disruption phenotype">
    <text evidence="11">Mice deficient for Slc27a1 are viable and do not display overt developmental phenotype or alteration in whole-body adiposity. However, they are protected from fat-induced accumulation of intramuscular fatty acyl-CoA and insulin resistance in skeletal muscle.</text>
</comment>
<comment type="similarity">
    <text evidence="24">Belongs to the ATP-dependent AMP-binding enzyme family.</text>
</comment>
<sequence length="646" mass="71276">MRAPGAGTASVASLALLWFLGLPWTWSAAAAFCVYVGGGGWRFLRIVCKTARRDLFGLSVLIRVRLELRRHRRAGDTIPCIFQAVARRQPERLALVDASSGICWTFAQLDTYSNAVANLFRQLGFAPGDVVAVFLEGRPEFVGLWLGLAKAGVVAALLNVNLRREPLAFCLGTSAAKALIYGGEMAAAVAEVSEQLGKSLLKFCSGDLGPESILPDTQLLDPMLAEAPTTPLAQAPGKGMDDRLFYIYTSGTTGLPKAAIVVHSRYYRIAAFGHHSYSMRAADVLYDCLPLYHSAGNIMGVGQCVIYGLTVVLRKKFSASRFWDDCVKYNCTVVQYIGEICRYLLRQPVRDVEQRHRVRLAVGNGLRPAIWEEFTQRFGVPQIGEFYGATECNCSIANMDGKVGSCGFNSRILTHVYPIRLVKVNEDTMEPLRDSEGLCIPCQPGEPGLLVGQINQQDPLRRFDGYVSDSATNKKIAHSVFRKGDSAYLSGDVLVMDELGYMYFRDRSGDTFRWRGENVSTTEVEAVLSRLLGQTDVAVYGVAVPGVEGKAGMAAIADPHSQLDPNSMYQELQKVLASYARPIFLRLLPQVDTTGTFKIQKTRLQREGFDPRQTSDRLFFLDLKQGRYVPLDERVHARICAGDFSL</sequence>
<reference key="1">
    <citation type="journal article" date="1994" name="Cell">
        <title>Expression cloning and characterization of a novel adipocyte long chain fatty acid transport protein.</title>
        <authorList>
            <person name="Schaffer J.E."/>
            <person name="Lodish H.F."/>
        </authorList>
    </citation>
    <scope>NUCLEOTIDE SEQUENCE [MRNA]</scope>
    <scope>FUNCTION</scope>
    <scope>CATALYTIC ACTIVITY</scope>
    <scope>TRANSPORT ACTIVITY</scope>
    <scope>BIOPHYSICOCHEMICAL PROPERTIES</scope>
    <scope>SUBCELLULAR LOCATION</scope>
    <scope>TOPOLOGY</scope>
    <scope>DEVELOPMENTAL STAGE</scope>
    <scope>TISSUE SPECIFICITY</scope>
    <source>
        <strain>SWR/J</strain>
    </source>
</reference>
<reference key="2">
    <citation type="journal article" date="1998" name="J. Biol. Chem.">
        <title>Characterization of the murine fatty acid transport protein gene and its insulin response sequence.</title>
        <authorList>
            <person name="Hui T.Y."/>
            <person name="Frohnert B.I."/>
            <person name="Smith A.J."/>
            <person name="Schaffer J.E."/>
            <person name="Bernlohr D.A."/>
        </authorList>
    </citation>
    <scope>NUCLEOTIDE SEQUENCE [GENOMIC DNA]</scope>
    <scope>INDUCTION</scope>
</reference>
<reference key="3">
    <citation type="journal article" date="2004" name="Genome Res.">
        <title>The status, quality, and expansion of the NIH full-length cDNA project: the Mammalian Gene Collection (MGC).</title>
        <authorList>
            <consortium name="The MGC Project Team"/>
        </authorList>
    </citation>
    <scope>NUCLEOTIDE SEQUENCE [LARGE SCALE MRNA]</scope>
    <source>
        <strain>C57BL/6J</strain>
        <tissue>Retina</tissue>
    </source>
</reference>
<reference key="4">
    <citation type="journal article" date="1998" name="J. Biol. Chem.">
        <title>Substitution of alanine for serine 250 in the murine fatty acid transport protein inhibits long chain fatty acid transport.</title>
        <authorList>
            <person name="Stuhlsatz-Krouper S.M."/>
            <person name="Bennett N.E."/>
            <person name="Schaffer J.E."/>
        </authorList>
    </citation>
    <scope>FUNCTION</scope>
    <scope>SUBCELLULAR LOCATION</scope>
    <scope>ATP-BINDING</scope>
    <scope>MUTAGENESIS OF SER-250</scope>
</reference>
<reference key="5">
    <citation type="journal article" date="1998" name="Proc. Natl. Acad. Sci. U.S.A.">
        <title>A family of fatty acid transporters conserved from mycobacterium to man.</title>
        <authorList>
            <person name="Hirsch D."/>
            <person name="Stahl A."/>
            <person name="Lodish H.F."/>
        </authorList>
    </citation>
    <scope>FUNCTION</scope>
    <scope>TRANSPORT ACTIVITY</scope>
    <scope>TISSUE SPECIFICITY</scope>
</reference>
<reference key="6">
    <citation type="journal article" date="1999" name="J. Biol. Chem.">
        <title>The fatty acid transport protein (FATP1) is a very long chain acyl-CoA synthetase.</title>
        <authorList>
            <person name="Coe N.R."/>
            <person name="Smith A.J."/>
            <person name="Frohnert B.I."/>
            <person name="Watkins P.A."/>
            <person name="Bernlohr D.A."/>
        </authorList>
    </citation>
    <scope>FUNCTION AS AN ACYL-COA LIGASE</scope>
    <scope>CATALYTIC ACTIVITY</scope>
    <scope>SUBCELLULAR LOCATION</scope>
    <scope>MUTAGENESIS OF 249-THR--GLY-254</scope>
</reference>
<reference key="7">
    <citation type="journal article" date="1999" name="Prostaglandins Leukot. Essent. Fatty Acids">
        <title>Molecular aspects of fatty acid transport: mutations in the IYTSGTTGXPK motif impair fatty acid transport protein function.</title>
        <authorList>
            <person name="Stuhlsatz-Krouper S.M."/>
            <person name="Bennett N.E."/>
            <person name="Schaffer J.E."/>
        </authorList>
    </citation>
    <scope>FUNCTION</scope>
    <scope>SUBCELLULAR LOCATION</scope>
    <scope>ATP-BINDING</scope>
    <scope>MUTAGENESIS OF SER-250 AND THR-252</scope>
    <scope>TRANSPORT ACTIVITY</scope>
</reference>
<reference key="8">
    <citation type="journal article" date="2001" name="J. Biol. Chem.">
        <title>Membrane topology of the murine fatty acid transport protein 1.</title>
        <authorList>
            <person name="Lewis S.E."/>
            <person name="Listenberger L.L."/>
            <person name="Ory D.S."/>
            <person name="Schaffer J.E."/>
        </authorList>
    </citation>
    <scope>SUBCELLULAR LOCATION</scope>
    <scope>TOPOLOGY</scope>
</reference>
<reference key="9">
    <citation type="journal article" date="2002" name="J. Lipid Res.">
        <title>FATP1 channels exogenous FA into 1,2,3-triacyl-sn-glycerol and down-regulates sphingomyelin and cholesterol metabolism in growing 293 cells.</title>
        <authorList>
            <person name="Hatch G.M."/>
            <person name="Smith A.J."/>
            <person name="Xu F.Y."/>
            <person name="Hall A.M."/>
            <person name="Bernlohr D.A."/>
        </authorList>
    </citation>
    <scope>FUNCTION</scope>
    <scope>CATALYTIC ACTIVITY</scope>
    <scope>ACTIVITY REGULATION</scope>
</reference>
<reference key="10">
    <citation type="journal article" date="2003" name="J. Biol. Chem.">
        <title>Oligomerization of the murine fatty acid transport protein 1.</title>
        <authorList>
            <person name="Richards M.R."/>
            <person name="Listenberger L.L."/>
            <person name="Kelly A.A."/>
            <person name="Lewis S.E."/>
            <person name="Ory D.S."/>
            <person name="Schaffer J.E."/>
        </authorList>
    </citation>
    <scope>SUBUNIT</scope>
    <scope>REGION</scope>
    <scope>TRANSPORT ACTIVITY</scope>
</reference>
<reference key="11">
    <citation type="journal article" date="2002" name="Dev. Cell">
        <title>Insulin causes fatty acid transport protein translocation and enhanced fatty acid uptake in adipocytes.</title>
        <authorList>
            <person name="Stahl A."/>
            <person name="Evans J.G."/>
            <person name="Pattel S."/>
            <person name="Hirsch D."/>
            <person name="Lodish H.F."/>
        </authorList>
    </citation>
    <scope>FUNCTION</scope>
    <scope>SUBCELLULAR LOCATION</scope>
</reference>
<reference key="12">
    <citation type="journal article" date="2003" name="J. Biol. Chem.">
        <title>Characterization of a heart-specific fatty acid transport protein.</title>
        <authorList>
            <person name="Gimeno R.E."/>
            <person name="Ortegon A.M."/>
            <person name="Patel S."/>
            <person name="Punreddy S."/>
            <person name="Ge P."/>
            <person name="Sun Y."/>
            <person name="Lodish H.F."/>
            <person name="Stahl A."/>
        </authorList>
    </citation>
    <scope>FUNCTION</scope>
    <scope>TISSUE SPECIFICITY</scope>
</reference>
<reference key="13">
    <citation type="journal article" date="2003" name="J. Biol. Chem.">
        <title>Characterization of the acyl-CoA synthetase activity of purified murine fatty acid transport protein 1.</title>
        <authorList>
            <person name="Hall A.M."/>
            <person name="Smith A.J."/>
            <person name="Bernlohr D.A."/>
        </authorList>
    </citation>
    <scope>FUNCTION AS AN ACYL-COA LIGASE</scope>
    <scope>CATALYTIC ACTIVITY</scope>
</reference>
<reference key="14">
    <citation type="journal article" date="2004" name="J. Clin. Invest.">
        <title>Inactivation of fatty acid transport protein 1 prevents fat-induced insulin resistance in skeletal muscle.</title>
        <authorList>
            <person name="Kim J.K."/>
            <person name="Gimeno R.E."/>
            <person name="Higashimori T."/>
            <person name="Kim H.J."/>
            <person name="Choi H."/>
            <person name="Punreddy S."/>
            <person name="Mozell R.L."/>
            <person name="Tan G."/>
            <person name="Stricker-Krongrad A."/>
            <person name="Hirsch D.J."/>
            <person name="Fillmore J.J."/>
            <person name="Liu Z.X."/>
            <person name="Dong J."/>
            <person name="Cline G."/>
            <person name="Stahl A."/>
            <person name="Lodish H.F."/>
            <person name="Shulman G.I."/>
        </authorList>
    </citation>
    <scope>FUNCTION</scope>
    <scope>DISRUPTION PHENOTYPE</scope>
</reference>
<reference key="15">
    <citation type="journal article" date="2005" name="Am. J. Physiol.">
        <title>Impact on fatty acid metabolism and differential localization of FATP1 and FAT/CD36 proteins delivered in cultured human muscle cells.</title>
        <authorList>
            <person name="Garcia-Martinez C."/>
            <person name="Marotta M."/>
            <person name="Moore-Carrasco R."/>
            <person name="Guitart M."/>
            <person name="Camps M."/>
            <person name="Busquets S."/>
            <person name="Montell E."/>
            <person name="Gomez-Foix A.M."/>
        </authorList>
    </citation>
    <scope>FUNCTION</scope>
    <scope>SUBCELLULAR LOCATION</scope>
</reference>
<reference key="16">
    <citation type="journal article" date="2005" name="J. Biol. Chem.">
        <title>Comparative biochemical studies of the murine fatty acid transport proteins (FATP) expressed in yeast.</title>
        <authorList>
            <person name="DiRusso C.C."/>
            <person name="Li H."/>
            <person name="Darwis D."/>
            <person name="Watkins P.A."/>
            <person name="Berger J."/>
            <person name="Black P.N."/>
        </authorList>
    </citation>
    <scope>FUNCTION</scope>
    <scope>CATALYTIC ACTIVITY</scope>
    <scope>TRANSPORT ACTIVITY</scope>
</reference>
<reference key="17">
    <citation type="journal article" date="2009" name="FEBS Lett.">
        <title>Additive effects of insulin and muscle contraction on fatty acid transport and fatty acid transporters, FAT/CD36, FABPpm, FATP1, 4 and 6.</title>
        <authorList>
            <person name="Jain S.S."/>
            <person name="Chabowski A."/>
            <person name="Snook L.A."/>
            <person name="Schwenk R.W."/>
            <person name="Glatz J.F."/>
            <person name="Luiken J.J."/>
            <person name="Bonen A."/>
        </authorList>
    </citation>
    <scope>FUNCTION</scope>
    <scope>ACTIVITY REGULATION</scope>
</reference>
<reference key="18">
    <citation type="journal article" date="2010" name="Cell">
        <title>A tissue-specific atlas of mouse protein phosphorylation and expression.</title>
        <authorList>
            <person name="Huttlin E.L."/>
            <person name="Jedrychowski M.P."/>
            <person name="Elias J.E."/>
            <person name="Goswami T."/>
            <person name="Rad R."/>
            <person name="Beausoleil S.A."/>
            <person name="Villen J."/>
            <person name="Haas W."/>
            <person name="Sowa M.E."/>
            <person name="Gygi S.P."/>
        </authorList>
    </citation>
    <scope>IDENTIFICATION BY MASS SPECTROMETRY [LARGE SCALE ANALYSIS]</scope>
    <source>
        <tissue>Brain</tissue>
        <tissue>Brown adipose tissue</tissue>
        <tissue>Heart</tissue>
        <tissue>Kidney</tissue>
        <tissue>Lung</tissue>
        <tissue>Pancreas</tissue>
        <tissue>Testis</tissue>
    </source>
</reference>
<reference key="19">
    <citation type="journal article" date="2014" name="PLoS ONE">
        <title>Fatty acid transport protein 1 (FATP1) localizes in mitochondria in mouse skeletal muscle and regulates lipid and ketone body disposal.</title>
        <authorList>
            <person name="Guitart M."/>
            <person name="Osorio-Conles O."/>
            <person name="Pentinat T."/>
            <person name="Cebria J."/>
            <person name="Garcia-Villoria J."/>
            <person name="Sala D."/>
            <person name="Sebastian D."/>
            <person name="Zorzano A."/>
            <person name="Ribes A."/>
            <person name="Jimenez-Chillaron J.C."/>
            <person name="Garcia-Martinez C."/>
            <person name="Gomez-Foix A.M."/>
        </authorList>
    </citation>
    <scope>FUNCTION</scope>
    <scope>SUBCELLULAR LOCATION</scope>
</reference>
<reference key="20">
    <citation type="journal article" date="2017" name="Nature">
        <title>EPRS is a critical mTORC1-S6K1 effector that influences adiposity in mice.</title>
        <authorList>
            <person name="Arif A."/>
            <person name="Terenzi F."/>
            <person name="Potdar A.A."/>
            <person name="Jia J."/>
            <person name="Sacks J."/>
            <person name="China A."/>
            <person name="Halawani D."/>
            <person name="Vasu K."/>
            <person name="Li X."/>
            <person name="Brown J.M."/>
            <person name="Chen J."/>
            <person name="Kozma S.C."/>
            <person name="Thomas G."/>
            <person name="Fox P.L."/>
        </authorList>
    </citation>
    <scope>FUNCTION</scope>
    <scope>INTERACTION WITH EPRS1</scope>
    <scope>SUBCELLULAR LOCATION</scope>
</reference>
<name>S27A1_MOUSE</name>
<evidence type="ECO:0000250" key="1">
    <source>
        <dbReference type="UniProtKB" id="Q6PCB7"/>
    </source>
</evidence>
<evidence type="ECO:0000255" key="2"/>
<evidence type="ECO:0000269" key="3">
    <source>
    </source>
</evidence>
<evidence type="ECO:0000269" key="4">
    <source>
    </source>
</evidence>
<evidence type="ECO:0000269" key="5">
    <source>
    </source>
</evidence>
<evidence type="ECO:0000269" key="6">
    <source>
    </source>
</evidence>
<evidence type="ECO:0000269" key="7">
    <source>
    </source>
</evidence>
<evidence type="ECO:0000269" key="8">
    <source>
    </source>
</evidence>
<evidence type="ECO:0000269" key="9">
    <source>
    </source>
</evidence>
<evidence type="ECO:0000269" key="10">
    <source>
    </source>
</evidence>
<evidence type="ECO:0000269" key="11">
    <source>
    </source>
</evidence>
<evidence type="ECO:0000269" key="12">
    <source>
    </source>
</evidence>
<evidence type="ECO:0000269" key="13">
    <source>
    </source>
</evidence>
<evidence type="ECO:0000269" key="14">
    <source>
    </source>
</evidence>
<evidence type="ECO:0000269" key="15">
    <source>
    </source>
</evidence>
<evidence type="ECO:0000269" key="16">
    <source>
    </source>
</evidence>
<evidence type="ECO:0000269" key="17">
    <source>
    </source>
</evidence>
<evidence type="ECO:0000269" key="18">
    <source>
    </source>
</evidence>
<evidence type="ECO:0000269" key="19">
    <source>
    </source>
</evidence>
<evidence type="ECO:0000269" key="20">
    <source>
    </source>
</evidence>
<evidence type="ECO:0000303" key="21">
    <source>
    </source>
</evidence>
<evidence type="ECO:0000303" key="22">
    <source>
    </source>
</evidence>
<evidence type="ECO:0000303" key="23">
    <source>
    </source>
</evidence>
<evidence type="ECO:0000305" key="24"/>
<evidence type="ECO:0000305" key="25">
    <source>
    </source>
</evidence>
<evidence type="ECO:0000305" key="26">
    <source>
    </source>
</evidence>
<evidence type="ECO:0000312" key="27">
    <source>
        <dbReference type="MGI" id="MGI:1347098"/>
    </source>
</evidence>
<keyword id="KW-1003">Cell membrane</keyword>
<keyword id="KW-0963">Cytoplasm</keyword>
<keyword id="KW-0276">Fatty acid metabolism</keyword>
<keyword id="KW-0436">Ligase</keyword>
<keyword id="KW-0443">Lipid metabolism</keyword>
<keyword id="KW-0445">Lipid transport</keyword>
<keyword id="KW-0472">Membrane</keyword>
<keyword id="KW-0496">Mitochondrion</keyword>
<keyword id="KW-1000">Mitochondrion outer membrane</keyword>
<keyword id="KW-0547">Nucleotide-binding</keyword>
<keyword id="KW-1185">Reference proteome</keyword>
<keyword id="KW-0812">Transmembrane</keyword>
<keyword id="KW-1133">Transmembrane helix</keyword>
<keyword id="KW-0813">Transport</keyword>
<gene>
    <name evidence="27" type="primary">Slc27a1</name>
    <name evidence="22" type="synonym">Fatp</name>
    <name evidence="23" type="synonym">Fatp1</name>
</gene>
<dbReference type="EC" id="6.2.1.15" evidence="4 7 10"/>
<dbReference type="EC" id="6.2.1.3" evidence="4 7 10"/>
<dbReference type="EC" id="6.2.1.-" evidence="12"/>
<dbReference type="EMBL" id="U15976">
    <property type="protein sequence ID" value="AAC71060.1"/>
    <property type="molecule type" value="mRNA"/>
</dbReference>
<dbReference type="EMBL" id="AF023258">
    <property type="protein sequence ID" value="AAC69640.1"/>
    <property type="molecule type" value="Genomic_DNA"/>
</dbReference>
<dbReference type="EMBL" id="AF023256">
    <property type="protein sequence ID" value="AAC69640.1"/>
    <property type="status" value="JOINED"/>
    <property type="molecule type" value="Genomic_DNA"/>
</dbReference>
<dbReference type="EMBL" id="AF023257">
    <property type="protein sequence ID" value="AAC69640.1"/>
    <property type="status" value="JOINED"/>
    <property type="molecule type" value="Genomic_DNA"/>
</dbReference>
<dbReference type="EMBL" id="BC028937">
    <property type="protein sequence ID" value="AAH28937.1"/>
    <property type="molecule type" value="mRNA"/>
</dbReference>
<dbReference type="CCDS" id="CCDS40386.1"/>
<dbReference type="PIR" id="A55093">
    <property type="entry name" value="A55093"/>
</dbReference>
<dbReference type="RefSeq" id="NP_001344109.1">
    <property type="nucleotide sequence ID" value="NM_001357180.2"/>
</dbReference>
<dbReference type="RefSeq" id="NP_001344110.1">
    <property type="nucleotide sequence ID" value="NM_001357181.2"/>
</dbReference>
<dbReference type="RefSeq" id="NP_001344111.1">
    <property type="nucleotide sequence ID" value="NM_001357182.2"/>
</dbReference>
<dbReference type="RefSeq" id="NP_036107.1">
    <property type="nucleotide sequence ID" value="NM_011977.5"/>
</dbReference>
<dbReference type="RefSeq" id="XP_006509736.1">
    <property type="nucleotide sequence ID" value="XM_006509673.2"/>
</dbReference>
<dbReference type="RefSeq" id="XP_006509737.1">
    <property type="nucleotide sequence ID" value="XM_006509674.4"/>
</dbReference>
<dbReference type="RefSeq" id="XP_006509738.1">
    <property type="nucleotide sequence ID" value="XM_006509675.4"/>
</dbReference>
<dbReference type="RefSeq" id="XP_006509739.1">
    <property type="nucleotide sequence ID" value="XM_006509676.3"/>
</dbReference>
<dbReference type="RefSeq" id="XP_030099438.1">
    <property type="nucleotide sequence ID" value="XM_030243578.2"/>
</dbReference>
<dbReference type="RefSeq" id="XP_030099439.1">
    <property type="nucleotide sequence ID" value="XM_030243579.2"/>
</dbReference>
<dbReference type="RefSeq" id="XP_030099440.1">
    <property type="nucleotide sequence ID" value="XM_030243580.2"/>
</dbReference>
<dbReference type="RefSeq" id="XP_030099441.1">
    <property type="nucleotide sequence ID" value="XM_030243581.2"/>
</dbReference>
<dbReference type="RefSeq" id="XP_030099442.1">
    <property type="nucleotide sequence ID" value="XM_030243582.1"/>
</dbReference>
<dbReference type="RefSeq" id="XP_036009951.1">
    <property type="nucleotide sequence ID" value="XM_036154058.1"/>
</dbReference>
<dbReference type="SMR" id="Q60714"/>
<dbReference type="BioGRID" id="205003">
    <property type="interactions" value="3"/>
</dbReference>
<dbReference type="FunCoup" id="Q60714">
    <property type="interactions" value="401"/>
</dbReference>
<dbReference type="STRING" id="10090.ENSMUSP00000034267"/>
<dbReference type="BindingDB" id="Q60714"/>
<dbReference type="ChEMBL" id="CHEMBL2052039"/>
<dbReference type="SwissLipids" id="SLP:000000426"/>
<dbReference type="GlyGen" id="Q60714">
    <property type="glycosylation" value="1 site"/>
</dbReference>
<dbReference type="iPTMnet" id="Q60714"/>
<dbReference type="PhosphoSitePlus" id="Q60714"/>
<dbReference type="SwissPalm" id="Q60714"/>
<dbReference type="jPOST" id="Q60714"/>
<dbReference type="PaxDb" id="10090-ENSMUSP00000034267"/>
<dbReference type="ProteomicsDB" id="256872"/>
<dbReference type="Pumba" id="Q60714"/>
<dbReference type="Antibodypedia" id="1644">
    <property type="antibodies" value="157 antibodies from 20 providers"/>
</dbReference>
<dbReference type="DNASU" id="26457"/>
<dbReference type="Ensembl" id="ENSMUST00000034267.5">
    <property type="protein sequence ID" value="ENSMUSP00000034267.5"/>
    <property type="gene ID" value="ENSMUSG00000031808.8"/>
</dbReference>
<dbReference type="Ensembl" id="ENSMUST00000212889.2">
    <property type="protein sequence ID" value="ENSMUSP00000148768.2"/>
    <property type="gene ID" value="ENSMUSG00000031808.8"/>
</dbReference>
<dbReference type="GeneID" id="26457"/>
<dbReference type="KEGG" id="mmu:26457"/>
<dbReference type="UCSC" id="uc009mdw.1">
    <property type="organism name" value="mouse"/>
</dbReference>
<dbReference type="AGR" id="MGI:1347098"/>
<dbReference type="CTD" id="376497"/>
<dbReference type="MGI" id="MGI:1347098">
    <property type="gene designation" value="Slc27a1"/>
</dbReference>
<dbReference type="VEuPathDB" id="HostDB:ENSMUSG00000031808"/>
<dbReference type="eggNOG" id="KOG1179">
    <property type="taxonomic scope" value="Eukaryota"/>
</dbReference>
<dbReference type="GeneTree" id="ENSGT00940000159323"/>
<dbReference type="HOGENOM" id="CLU_000022_46_2_1"/>
<dbReference type="InParanoid" id="Q60714"/>
<dbReference type="OMA" id="HHGLIMR"/>
<dbReference type="OrthoDB" id="288590at2759"/>
<dbReference type="PhylomeDB" id="Q60714"/>
<dbReference type="TreeFam" id="TF313430"/>
<dbReference type="Reactome" id="R-MMU-804914">
    <property type="pathway name" value="Transport of fatty acids"/>
</dbReference>
<dbReference type="BioGRID-ORCS" id="26457">
    <property type="hits" value="4 hits in 79 CRISPR screens"/>
</dbReference>
<dbReference type="CD-CODE" id="CE726F99">
    <property type="entry name" value="Postsynaptic density"/>
</dbReference>
<dbReference type="ChiTaRS" id="Slc27a1">
    <property type="organism name" value="mouse"/>
</dbReference>
<dbReference type="PRO" id="PR:Q60714"/>
<dbReference type="Proteomes" id="UP000000589">
    <property type="component" value="Chromosome 8"/>
</dbReference>
<dbReference type="RNAct" id="Q60714">
    <property type="molecule type" value="protein"/>
</dbReference>
<dbReference type="Bgee" id="ENSMUSG00000031808">
    <property type="expression patterns" value="Expressed in retinal neural layer and 267 other cell types or tissues"/>
</dbReference>
<dbReference type="ExpressionAtlas" id="Q60714">
    <property type="expression patterns" value="baseline and differential"/>
</dbReference>
<dbReference type="GO" id="GO:0009925">
    <property type="term" value="C:basal plasma membrane"/>
    <property type="evidence" value="ECO:0000314"/>
    <property type="project" value="ARUK-UCL"/>
</dbReference>
<dbReference type="GO" id="GO:0031410">
    <property type="term" value="C:cytoplasmic vesicle"/>
    <property type="evidence" value="ECO:0000304"/>
    <property type="project" value="MGI"/>
</dbReference>
<dbReference type="GO" id="GO:0005783">
    <property type="term" value="C:endoplasmic reticulum"/>
    <property type="evidence" value="ECO:0000314"/>
    <property type="project" value="MGI"/>
</dbReference>
<dbReference type="GO" id="GO:0005789">
    <property type="term" value="C:endoplasmic reticulum membrane"/>
    <property type="evidence" value="ECO:0000304"/>
    <property type="project" value="Reactome"/>
</dbReference>
<dbReference type="GO" id="GO:0005741">
    <property type="term" value="C:mitochondrial outer membrane"/>
    <property type="evidence" value="ECO:0007669"/>
    <property type="project" value="UniProtKB-SubCell"/>
</dbReference>
<dbReference type="GO" id="GO:0005886">
    <property type="term" value="C:plasma membrane"/>
    <property type="evidence" value="ECO:0000314"/>
    <property type="project" value="UniProtKB"/>
</dbReference>
<dbReference type="GO" id="GO:0047676">
    <property type="term" value="F:arachidonate-CoA ligase activity"/>
    <property type="evidence" value="ECO:0007669"/>
    <property type="project" value="UniProtKB-EC"/>
</dbReference>
<dbReference type="GO" id="GO:0015225">
    <property type="term" value="F:biotin transmembrane transporter activity"/>
    <property type="evidence" value="ECO:0007669"/>
    <property type="project" value="Ensembl"/>
</dbReference>
<dbReference type="GO" id="GO:0015562">
    <property type="term" value="F:efflux transmembrane transporter activity"/>
    <property type="evidence" value="ECO:0007669"/>
    <property type="project" value="Ensembl"/>
</dbReference>
<dbReference type="GO" id="GO:0015245">
    <property type="term" value="F:fatty acid transmembrane transporter activity"/>
    <property type="evidence" value="ECO:0000314"/>
    <property type="project" value="UniProtKB"/>
</dbReference>
<dbReference type="GO" id="GO:0071714">
    <property type="term" value="F:icosanoid transmembrane transporter activity"/>
    <property type="evidence" value="ECO:0000269"/>
    <property type="project" value="Reactome"/>
</dbReference>
<dbReference type="GO" id="GO:0042802">
    <property type="term" value="F:identical protein binding"/>
    <property type="evidence" value="ECO:0000353"/>
    <property type="project" value="MGI"/>
</dbReference>
<dbReference type="GO" id="GO:0005324">
    <property type="term" value="F:long-chain fatty acid transmembrane transporter activity"/>
    <property type="evidence" value="ECO:0007669"/>
    <property type="project" value="Ensembl"/>
</dbReference>
<dbReference type="GO" id="GO:0004467">
    <property type="term" value="F:long-chain fatty acid-CoA ligase activity"/>
    <property type="evidence" value="ECO:0000314"/>
    <property type="project" value="UniProtKB"/>
</dbReference>
<dbReference type="GO" id="GO:0000166">
    <property type="term" value="F:nucleotide binding"/>
    <property type="evidence" value="ECO:0007669"/>
    <property type="project" value="UniProtKB-KW"/>
</dbReference>
<dbReference type="GO" id="GO:0090434">
    <property type="term" value="F:oleoyl-CoA ligase activity"/>
    <property type="evidence" value="ECO:0000315"/>
    <property type="project" value="ARUK-UCL"/>
</dbReference>
<dbReference type="GO" id="GO:0043539">
    <property type="term" value="F:protein serine/threonine kinase activator activity"/>
    <property type="evidence" value="ECO:0000315"/>
    <property type="project" value="MGI"/>
</dbReference>
<dbReference type="GO" id="GO:0031957">
    <property type="term" value="F:very long-chain fatty acid-CoA ligase activity"/>
    <property type="evidence" value="ECO:0000314"/>
    <property type="project" value="MGI"/>
</dbReference>
<dbReference type="GO" id="GO:0033211">
    <property type="term" value="P:adiponectin-activated signaling pathway"/>
    <property type="evidence" value="ECO:0000315"/>
    <property type="project" value="MGI"/>
</dbReference>
<dbReference type="GO" id="GO:1905135">
    <property type="term" value="P:biotin import across plasma membrane"/>
    <property type="evidence" value="ECO:0007669"/>
    <property type="project" value="Ensembl"/>
</dbReference>
<dbReference type="GO" id="GO:0140115">
    <property type="term" value="P:export across plasma membrane"/>
    <property type="evidence" value="ECO:0007669"/>
    <property type="project" value="Ensembl"/>
</dbReference>
<dbReference type="GO" id="GO:0015908">
    <property type="term" value="P:fatty acid transport"/>
    <property type="evidence" value="ECO:0000314"/>
    <property type="project" value="MGI"/>
</dbReference>
<dbReference type="GO" id="GO:0044381">
    <property type="term" value="P:glucose import in response to insulin stimulus"/>
    <property type="evidence" value="ECO:0000315"/>
    <property type="project" value="ARUK-UCL"/>
</dbReference>
<dbReference type="GO" id="GO:1990379">
    <property type="term" value="P:lipid transport across blood-brain barrier"/>
    <property type="evidence" value="ECO:0007669"/>
    <property type="project" value="Ensembl"/>
</dbReference>
<dbReference type="GO" id="GO:0015911">
    <property type="term" value="P:long-chain fatty acid import across plasma membrane"/>
    <property type="evidence" value="ECO:0007669"/>
    <property type="project" value="Ensembl"/>
</dbReference>
<dbReference type="GO" id="GO:0044539">
    <property type="term" value="P:long-chain fatty acid import into cell"/>
    <property type="evidence" value="ECO:0000314"/>
    <property type="project" value="UniProtKB"/>
</dbReference>
<dbReference type="GO" id="GO:0001676">
    <property type="term" value="P:long-chain fatty acid metabolic process"/>
    <property type="evidence" value="ECO:0000304"/>
    <property type="project" value="MGI"/>
</dbReference>
<dbReference type="GO" id="GO:0015909">
    <property type="term" value="P:long-chain fatty acid transport"/>
    <property type="evidence" value="ECO:0000315"/>
    <property type="project" value="MGI"/>
</dbReference>
<dbReference type="GO" id="GO:0001579">
    <property type="term" value="P:medium-chain fatty acid transport"/>
    <property type="evidence" value="ECO:0000316"/>
    <property type="project" value="MGI"/>
</dbReference>
<dbReference type="GO" id="GO:0031652">
    <property type="term" value="P:positive regulation of heat generation"/>
    <property type="evidence" value="ECO:0000315"/>
    <property type="project" value="MGI"/>
</dbReference>
<dbReference type="GO" id="GO:0010867">
    <property type="term" value="P:positive regulation of triglyceride biosynthetic process"/>
    <property type="evidence" value="ECO:0000314"/>
    <property type="project" value="UniProtKB"/>
</dbReference>
<dbReference type="GO" id="GO:0009409">
    <property type="term" value="P:response to cold"/>
    <property type="evidence" value="ECO:0000315"/>
    <property type="project" value="MGI"/>
</dbReference>
<dbReference type="GO" id="GO:0032868">
    <property type="term" value="P:response to insulin"/>
    <property type="evidence" value="ECO:0000315"/>
    <property type="project" value="MGI"/>
</dbReference>
<dbReference type="FunFam" id="3.30.300.30:FF:000002">
    <property type="entry name" value="Long-chain fatty acid transport protein 1"/>
    <property type="match status" value="1"/>
</dbReference>
<dbReference type="FunFam" id="3.40.50.12780:FF:000008">
    <property type="entry name" value="Long-chain fatty acid transport protein 4"/>
    <property type="match status" value="1"/>
</dbReference>
<dbReference type="Gene3D" id="3.30.300.30">
    <property type="match status" value="1"/>
</dbReference>
<dbReference type="Gene3D" id="3.40.50.12780">
    <property type="entry name" value="N-terminal domain of ligase-like"/>
    <property type="match status" value="1"/>
</dbReference>
<dbReference type="InterPro" id="IPR025110">
    <property type="entry name" value="AMP-bd_C"/>
</dbReference>
<dbReference type="InterPro" id="IPR045851">
    <property type="entry name" value="AMP-bd_C_sf"/>
</dbReference>
<dbReference type="InterPro" id="IPR020845">
    <property type="entry name" value="AMP-binding_CS"/>
</dbReference>
<dbReference type="InterPro" id="IPR000873">
    <property type="entry name" value="AMP-dep_synth/lig_dom"/>
</dbReference>
<dbReference type="InterPro" id="IPR042099">
    <property type="entry name" value="ANL_N_sf"/>
</dbReference>
<dbReference type="NCBIfam" id="NF006134">
    <property type="entry name" value="PRK08279.1"/>
    <property type="match status" value="1"/>
</dbReference>
<dbReference type="PANTHER" id="PTHR43107">
    <property type="entry name" value="LONG-CHAIN FATTY ACID TRANSPORT PROTEIN"/>
    <property type="match status" value="1"/>
</dbReference>
<dbReference type="PANTHER" id="PTHR43107:SF7">
    <property type="entry name" value="LONG-CHAIN FATTY ACID TRANSPORT PROTEIN 1"/>
    <property type="match status" value="1"/>
</dbReference>
<dbReference type="Pfam" id="PF00501">
    <property type="entry name" value="AMP-binding"/>
    <property type="match status" value="1"/>
</dbReference>
<dbReference type="Pfam" id="PF13193">
    <property type="entry name" value="AMP-binding_C"/>
    <property type="match status" value="1"/>
</dbReference>
<dbReference type="SUPFAM" id="SSF56801">
    <property type="entry name" value="Acetyl-CoA synthetase-like"/>
    <property type="match status" value="1"/>
</dbReference>
<dbReference type="PROSITE" id="PS00455">
    <property type="entry name" value="AMP_BINDING"/>
    <property type="match status" value="1"/>
</dbReference>
<feature type="chain" id="PRO_0000193202" description="Long-chain fatty acid transport protein 1">
    <location>
        <begin position="1"/>
        <end position="646"/>
    </location>
</feature>
<feature type="topological domain" description="Extracellular" evidence="25">
    <location>
        <begin position="1"/>
        <end position="13"/>
    </location>
</feature>
<feature type="transmembrane region" description="Helical" evidence="2">
    <location>
        <begin position="14"/>
        <end position="34"/>
    </location>
</feature>
<feature type="topological domain" description="Cytoplasmic" evidence="25">
    <location>
        <begin position="35"/>
        <end position="646"/>
    </location>
</feature>
<feature type="region of interest" description="Sufficient for oligomerization" evidence="8">
    <location>
        <begin position="191"/>
        <end position="475"/>
    </location>
</feature>
<feature type="binding site" evidence="3 4 20">
    <location>
        <begin position="246"/>
        <end position="257"/>
    </location>
    <ligand>
        <name>AMP</name>
        <dbReference type="ChEBI" id="CHEBI:456215"/>
    </ligand>
</feature>
<feature type="mutagenesis site" description="Abolishes very-long-chain acyl-CoA synthetase activity." evidence="4">
    <original>TSGTTG</original>
    <variation>LEAAA</variation>
    <location>
        <begin position="249"/>
        <end position="254"/>
    </location>
</feature>
<feature type="mutagenesis site" description="Diminishes LCFA import and decreases nucleotide binding. No effect on localization to the cell membrane." evidence="3 20">
    <original>S</original>
    <variation>A</variation>
    <location>
        <position position="250"/>
    </location>
</feature>
<feature type="mutagenesis site" description="Diminishes LCFA import and decreases nucleotide binding. No effect on localization to the cell membrane." evidence="3">
    <original>T</original>
    <variation>A</variation>
    <location>
        <position position="252"/>
    </location>
</feature>
<accession>Q60714</accession>